<comment type="function">
    <text evidence="2">Initiates the repair of damaged proteins by catalyzing methyl esterification of L-isoaspartyl and D-aspartyl residues produced by spontaneous isomerization and racemization of L-aspartyl and L-asparaginyl residues in aging peptides and proteins.</text>
</comment>
<comment type="catalytic activity">
    <reaction evidence="2">
        <text>[protein]-L-isoaspartate + S-adenosyl-L-methionine = [protein]-L-isoaspartate alpha-methyl ester + S-adenosyl-L-homocysteine</text>
        <dbReference type="Rhea" id="RHEA:12705"/>
        <dbReference type="Rhea" id="RHEA-COMP:12143"/>
        <dbReference type="Rhea" id="RHEA-COMP:12144"/>
        <dbReference type="ChEBI" id="CHEBI:57856"/>
        <dbReference type="ChEBI" id="CHEBI:59789"/>
        <dbReference type="ChEBI" id="CHEBI:90596"/>
        <dbReference type="ChEBI" id="CHEBI:90598"/>
        <dbReference type="EC" id="2.1.1.77"/>
    </reaction>
    <physiologicalReaction direction="left-to-right" evidence="2">
        <dbReference type="Rhea" id="RHEA:12706"/>
    </physiologicalReaction>
</comment>
<comment type="subcellular location">
    <subcellularLocation>
        <location evidence="1">Cytoplasm</location>
        <location evidence="1">Cytosol</location>
    </subcellularLocation>
</comment>
<comment type="similarity">
    <text evidence="4">Belongs to the methyltransferase superfamily. L-isoaspartyl/D-aspartyl protein methyltransferase family.</text>
</comment>
<gene>
    <name type="primary">pcmA</name>
    <name type="ORF">DDB_G0280979</name>
</gene>
<dbReference type="EC" id="2.1.1.77" evidence="2"/>
<dbReference type="EMBL" id="AF310890">
    <property type="protein sequence ID" value="AAG45123.1"/>
    <property type="molecule type" value="Genomic_DNA"/>
</dbReference>
<dbReference type="EMBL" id="AAFI02000040">
    <property type="protein sequence ID" value="EAL66786.1"/>
    <property type="molecule type" value="Genomic_DNA"/>
</dbReference>
<dbReference type="RefSeq" id="XP_640936.1">
    <property type="nucleotide sequence ID" value="XM_635844.1"/>
</dbReference>
<dbReference type="SMR" id="Q9GPS6"/>
<dbReference type="FunCoup" id="Q9GPS6">
    <property type="interactions" value="354"/>
</dbReference>
<dbReference type="STRING" id="44689.Q9GPS6"/>
<dbReference type="PaxDb" id="44689-DDB0214947"/>
<dbReference type="EnsemblProtists" id="EAL66786">
    <property type="protein sequence ID" value="EAL66786"/>
    <property type="gene ID" value="DDB_G0280979"/>
</dbReference>
<dbReference type="GeneID" id="8623001"/>
<dbReference type="KEGG" id="ddi:DDB_G0280979"/>
<dbReference type="dictyBase" id="DDB_G0280979">
    <property type="gene designation" value="pcmA"/>
</dbReference>
<dbReference type="VEuPathDB" id="AmoebaDB:DDB_G0280979"/>
<dbReference type="eggNOG" id="KOG1661">
    <property type="taxonomic scope" value="Eukaryota"/>
</dbReference>
<dbReference type="HOGENOM" id="CLU_055432_0_4_1"/>
<dbReference type="InParanoid" id="Q9GPS6"/>
<dbReference type="OMA" id="QDSPCPI"/>
<dbReference type="PhylomeDB" id="Q9GPS6"/>
<dbReference type="Reactome" id="R-DDI-5676934">
    <property type="pathway name" value="Protein repair"/>
</dbReference>
<dbReference type="PRO" id="PR:Q9GPS6"/>
<dbReference type="Proteomes" id="UP000002195">
    <property type="component" value="Chromosome 3"/>
</dbReference>
<dbReference type="GO" id="GO:0005737">
    <property type="term" value="C:cytoplasm"/>
    <property type="evidence" value="ECO:0000318"/>
    <property type="project" value="GO_Central"/>
</dbReference>
<dbReference type="GO" id="GO:0005829">
    <property type="term" value="C:cytosol"/>
    <property type="evidence" value="ECO:0007669"/>
    <property type="project" value="UniProtKB-SubCell"/>
</dbReference>
<dbReference type="GO" id="GO:0004719">
    <property type="term" value="F:protein-L-isoaspartate (D-aspartate) O-methyltransferase activity"/>
    <property type="evidence" value="ECO:0000318"/>
    <property type="project" value="GO_Central"/>
</dbReference>
<dbReference type="GO" id="GO:0032259">
    <property type="term" value="P:methylation"/>
    <property type="evidence" value="ECO:0007669"/>
    <property type="project" value="UniProtKB-KW"/>
</dbReference>
<dbReference type="GO" id="GO:0036211">
    <property type="term" value="P:protein modification process"/>
    <property type="evidence" value="ECO:0007669"/>
    <property type="project" value="InterPro"/>
</dbReference>
<dbReference type="CDD" id="cd02440">
    <property type="entry name" value="AdoMet_MTases"/>
    <property type="match status" value="1"/>
</dbReference>
<dbReference type="FunFam" id="3.40.50.150:FF:000556">
    <property type="entry name" value="Probable protein-L-isoaspartate O-methyltransferase"/>
    <property type="match status" value="1"/>
</dbReference>
<dbReference type="Gene3D" id="3.40.50.150">
    <property type="entry name" value="Vaccinia Virus protein VP39"/>
    <property type="match status" value="1"/>
</dbReference>
<dbReference type="InterPro" id="IPR000682">
    <property type="entry name" value="PCMT"/>
</dbReference>
<dbReference type="InterPro" id="IPR029063">
    <property type="entry name" value="SAM-dependent_MTases_sf"/>
</dbReference>
<dbReference type="NCBIfam" id="TIGR00080">
    <property type="entry name" value="pimt"/>
    <property type="match status" value="1"/>
</dbReference>
<dbReference type="PANTHER" id="PTHR11579">
    <property type="entry name" value="PROTEIN-L-ISOASPARTATE O-METHYLTRANSFERASE"/>
    <property type="match status" value="1"/>
</dbReference>
<dbReference type="PANTHER" id="PTHR11579:SF0">
    <property type="entry name" value="PROTEIN-L-ISOASPARTATE(D-ASPARTATE) O-METHYLTRANSFERASE"/>
    <property type="match status" value="1"/>
</dbReference>
<dbReference type="Pfam" id="PF01135">
    <property type="entry name" value="PCMT"/>
    <property type="match status" value="1"/>
</dbReference>
<dbReference type="SUPFAM" id="SSF53335">
    <property type="entry name" value="S-adenosyl-L-methionine-dependent methyltransferases"/>
    <property type="match status" value="1"/>
</dbReference>
<feature type="chain" id="PRO_0000326194" description="Probable protein-L-isoaspartate O-methyltransferase">
    <location>
        <begin position="1"/>
        <end position="316"/>
    </location>
</feature>
<feature type="active site" evidence="3">
    <location>
        <position position="106"/>
    </location>
</feature>
<feature type="binding site" evidence="1">
    <location>
        <begin position="103"/>
        <end position="106"/>
    </location>
    <ligand>
        <name>S-adenosyl-L-homocysteine</name>
        <dbReference type="ChEBI" id="CHEBI:57856"/>
    </ligand>
</feature>
<feature type="binding site" evidence="1">
    <location>
        <position position="111"/>
    </location>
    <ligand>
        <name>S-adenosyl-L-homocysteine</name>
        <dbReference type="ChEBI" id="CHEBI:57856"/>
    </ligand>
</feature>
<feature type="binding site" evidence="1">
    <location>
        <position position="136"/>
    </location>
    <ligand>
        <name>S-adenosyl-L-homocysteine</name>
        <dbReference type="ChEBI" id="CHEBI:57856"/>
    </ligand>
</feature>
<feature type="binding site" evidence="1">
    <location>
        <begin position="157"/>
        <end position="158"/>
    </location>
    <ligand>
        <name>S-adenosyl-L-homocysteine</name>
        <dbReference type="ChEBI" id="CHEBI:57856"/>
    </ligand>
</feature>
<feature type="binding site" evidence="1">
    <location>
        <begin position="187"/>
        <end position="188"/>
    </location>
    <ligand>
        <name>S-adenosyl-L-homocysteine</name>
        <dbReference type="ChEBI" id="CHEBI:57856"/>
    </ligand>
</feature>
<feature type="binding site" evidence="1">
    <location>
        <position position="263"/>
    </location>
    <ligand>
        <name>S-adenosyl-L-homocysteine</name>
        <dbReference type="ChEBI" id="CHEBI:57856"/>
    </ligand>
</feature>
<feature type="binding site" evidence="1">
    <location>
        <position position="268"/>
    </location>
    <ligand>
        <name>S-adenosyl-L-homocysteine</name>
        <dbReference type="ChEBI" id="CHEBI:57856"/>
    </ligand>
</feature>
<protein>
    <recommendedName>
        <fullName evidence="2">Probable protein-L-isoaspartate O-methyltransferase</fullName>
        <shortName>PIMT</shortName>
        <ecNumber evidence="2">2.1.1.77</ecNumber>
    </recommendedName>
    <alternativeName>
        <fullName>L-isoaspartyl protein carboxyl methyltransferase</fullName>
    </alternativeName>
    <alternativeName>
        <fullName>Protein L-isoaspartyl methyltransferase</fullName>
    </alternativeName>
    <alternativeName>
        <fullName>Protein-beta-aspartate methyltransferase</fullName>
    </alternativeName>
</protein>
<evidence type="ECO:0000250" key="1">
    <source>
        <dbReference type="UniProtKB" id="P22061"/>
    </source>
</evidence>
<evidence type="ECO:0000250" key="2">
    <source>
        <dbReference type="UniProtKB" id="P23506"/>
    </source>
</evidence>
<evidence type="ECO:0000250" key="3">
    <source>
        <dbReference type="UniProtKB" id="Q27869"/>
    </source>
</evidence>
<evidence type="ECO:0000305" key="4"/>
<name>PIMT_DICDI</name>
<proteinExistence type="inferred from homology"/>
<accession>Q9GPS6</accession>
<accession>Q54U40</accession>
<sequence length="316" mass="35529">MVLILDNDLKPLYFTLAIISASFLVKRAYQSTNIYDFFNIKKKCNPFPQSQSELVDLLHYQKRMVLNKTIVETLKFVDRKLFLENKNVENPYYDEPKPIGYNATISAPHMHALMLDLLADRIPMSNGVALDIGSGSGYVTACLGHLMGCTGRVIGVEHIPELIERSIESIKRLDSTLLDRIQFLVGDGIKGWKQLKYDIIYLGAAIESLQVARELIDQLKNGGRIVMPVGKSNDFHELMVVDKNEDGIVSIKSLGVVRFVPLTSKENQLNPKNKPNATKVTNINGEKTLIRCEIIPAPDSNSNNNIKEFENLINKK</sequence>
<reference key="1">
    <citation type="journal article" date="2001" name="Nucleic Acids Res.">
        <title>The Dictyostelium discoideum family of Rho-related proteins.</title>
        <authorList>
            <person name="Rivero F."/>
            <person name="Dislich H."/>
            <person name="Gloeckner G."/>
            <person name="Noegel A.A."/>
        </authorList>
    </citation>
    <scope>NUCLEOTIDE SEQUENCE [GENOMIC DNA]</scope>
    <source>
        <strain>AX4</strain>
    </source>
</reference>
<reference key="2">
    <citation type="journal article" date="2005" name="Nature">
        <title>The genome of the social amoeba Dictyostelium discoideum.</title>
        <authorList>
            <person name="Eichinger L."/>
            <person name="Pachebat J.A."/>
            <person name="Gloeckner G."/>
            <person name="Rajandream M.A."/>
            <person name="Sucgang R."/>
            <person name="Berriman M."/>
            <person name="Song J."/>
            <person name="Olsen R."/>
            <person name="Szafranski K."/>
            <person name="Xu Q."/>
            <person name="Tunggal B."/>
            <person name="Kummerfeld S."/>
            <person name="Madera M."/>
            <person name="Konfortov B.A."/>
            <person name="Rivero F."/>
            <person name="Bankier A.T."/>
            <person name="Lehmann R."/>
            <person name="Hamlin N."/>
            <person name="Davies R."/>
            <person name="Gaudet P."/>
            <person name="Fey P."/>
            <person name="Pilcher K."/>
            <person name="Chen G."/>
            <person name="Saunders D."/>
            <person name="Sodergren E.J."/>
            <person name="Davis P."/>
            <person name="Kerhornou A."/>
            <person name="Nie X."/>
            <person name="Hall N."/>
            <person name="Anjard C."/>
            <person name="Hemphill L."/>
            <person name="Bason N."/>
            <person name="Farbrother P."/>
            <person name="Desany B."/>
            <person name="Just E."/>
            <person name="Morio T."/>
            <person name="Rost R."/>
            <person name="Churcher C.M."/>
            <person name="Cooper J."/>
            <person name="Haydock S."/>
            <person name="van Driessche N."/>
            <person name="Cronin A."/>
            <person name="Goodhead I."/>
            <person name="Muzny D.M."/>
            <person name="Mourier T."/>
            <person name="Pain A."/>
            <person name="Lu M."/>
            <person name="Harper D."/>
            <person name="Lindsay R."/>
            <person name="Hauser H."/>
            <person name="James K.D."/>
            <person name="Quiles M."/>
            <person name="Madan Babu M."/>
            <person name="Saito T."/>
            <person name="Buchrieser C."/>
            <person name="Wardroper A."/>
            <person name="Felder M."/>
            <person name="Thangavelu M."/>
            <person name="Johnson D."/>
            <person name="Knights A."/>
            <person name="Loulseged H."/>
            <person name="Mungall K.L."/>
            <person name="Oliver K."/>
            <person name="Price C."/>
            <person name="Quail M.A."/>
            <person name="Urushihara H."/>
            <person name="Hernandez J."/>
            <person name="Rabbinowitsch E."/>
            <person name="Steffen D."/>
            <person name="Sanders M."/>
            <person name="Ma J."/>
            <person name="Kohara Y."/>
            <person name="Sharp S."/>
            <person name="Simmonds M.N."/>
            <person name="Spiegler S."/>
            <person name="Tivey A."/>
            <person name="Sugano S."/>
            <person name="White B."/>
            <person name="Walker D."/>
            <person name="Woodward J.R."/>
            <person name="Winckler T."/>
            <person name="Tanaka Y."/>
            <person name="Shaulsky G."/>
            <person name="Schleicher M."/>
            <person name="Weinstock G.M."/>
            <person name="Rosenthal A."/>
            <person name="Cox E.C."/>
            <person name="Chisholm R.L."/>
            <person name="Gibbs R.A."/>
            <person name="Loomis W.F."/>
            <person name="Platzer M."/>
            <person name="Kay R.R."/>
            <person name="Williams J.G."/>
            <person name="Dear P.H."/>
            <person name="Noegel A.A."/>
            <person name="Barrell B.G."/>
            <person name="Kuspa A."/>
        </authorList>
    </citation>
    <scope>NUCLEOTIDE SEQUENCE [LARGE SCALE GENOMIC DNA]</scope>
    <source>
        <strain>AX4</strain>
    </source>
</reference>
<organism>
    <name type="scientific">Dictyostelium discoideum</name>
    <name type="common">Social amoeba</name>
    <dbReference type="NCBI Taxonomy" id="44689"/>
    <lineage>
        <taxon>Eukaryota</taxon>
        <taxon>Amoebozoa</taxon>
        <taxon>Evosea</taxon>
        <taxon>Eumycetozoa</taxon>
        <taxon>Dictyostelia</taxon>
        <taxon>Dictyosteliales</taxon>
        <taxon>Dictyosteliaceae</taxon>
        <taxon>Dictyostelium</taxon>
    </lineage>
</organism>
<keyword id="KW-0963">Cytoplasm</keyword>
<keyword id="KW-0489">Methyltransferase</keyword>
<keyword id="KW-1185">Reference proteome</keyword>
<keyword id="KW-0949">S-adenosyl-L-methionine</keyword>
<keyword id="KW-0808">Transferase</keyword>